<keyword id="KW-0012">Acyltransferase</keyword>
<keyword id="KW-0963">Cytoplasm</keyword>
<keyword id="KW-0408">Iron</keyword>
<keyword id="KW-0479">Metal-binding</keyword>
<keyword id="KW-0808">Transferase</keyword>
<keyword id="KW-0819">tRNA processing</keyword>
<sequence>MTKDILILAVETSCDETSVSVIKNGRDILSNTVLSQIESHKRFGGVVPEVASRHHVEGITTTINEALVDADVSMEDIDAIAVTEGPGLIGALLIGVNAAKALAFAYDKPLIPVHHIAGHIYANHIEDLLTFPLIALIVSGGHTELVYMKDHLTFEVIGETRDDAVGEAYDKVARTIGLNYPGGPQVDRLAAEGEDTYSFPRVWLDKDSYDFSFSGLKSAVINQLHNQRQKNIPIIEANVATSFQNSVVEVLTFKAIQACKEYGVQRLIVAGGVASNKGLRQSLADQCKVNDIQLTIPSPKLCTDNAAMIGVAGHYLYQQGRFADLGLNGHSNIDLEEYSAE</sequence>
<dbReference type="EC" id="2.3.1.234" evidence="1"/>
<dbReference type="EMBL" id="AJ938182">
    <property type="protein sequence ID" value="CAI81623.1"/>
    <property type="molecule type" value="Genomic_DNA"/>
</dbReference>
<dbReference type="RefSeq" id="WP_000159039.1">
    <property type="nucleotide sequence ID" value="NC_007622.1"/>
</dbReference>
<dbReference type="SMR" id="Q2YUG0"/>
<dbReference type="KEGG" id="sab:SAB1934c"/>
<dbReference type="HOGENOM" id="CLU_023208_0_2_9"/>
<dbReference type="GO" id="GO:0005737">
    <property type="term" value="C:cytoplasm"/>
    <property type="evidence" value="ECO:0007669"/>
    <property type="project" value="UniProtKB-SubCell"/>
</dbReference>
<dbReference type="GO" id="GO:0005506">
    <property type="term" value="F:iron ion binding"/>
    <property type="evidence" value="ECO:0007669"/>
    <property type="project" value="UniProtKB-UniRule"/>
</dbReference>
<dbReference type="GO" id="GO:0061711">
    <property type="term" value="F:N(6)-L-threonylcarbamoyladenine synthase activity"/>
    <property type="evidence" value="ECO:0007669"/>
    <property type="project" value="UniProtKB-EC"/>
</dbReference>
<dbReference type="GO" id="GO:0002949">
    <property type="term" value="P:tRNA threonylcarbamoyladenosine modification"/>
    <property type="evidence" value="ECO:0007669"/>
    <property type="project" value="UniProtKB-UniRule"/>
</dbReference>
<dbReference type="CDD" id="cd24133">
    <property type="entry name" value="ASKHA_NBD_TsaD_bac"/>
    <property type="match status" value="1"/>
</dbReference>
<dbReference type="FunFam" id="3.30.420.40:FF:000012">
    <property type="entry name" value="tRNA N6-adenosine threonylcarbamoyltransferase"/>
    <property type="match status" value="1"/>
</dbReference>
<dbReference type="FunFam" id="3.30.420.40:FF:000040">
    <property type="entry name" value="tRNA N6-adenosine threonylcarbamoyltransferase"/>
    <property type="match status" value="1"/>
</dbReference>
<dbReference type="Gene3D" id="3.30.420.40">
    <property type="match status" value="2"/>
</dbReference>
<dbReference type="HAMAP" id="MF_01445">
    <property type="entry name" value="TsaD"/>
    <property type="match status" value="1"/>
</dbReference>
<dbReference type="InterPro" id="IPR043129">
    <property type="entry name" value="ATPase_NBD"/>
</dbReference>
<dbReference type="InterPro" id="IPR000905">
    <property type="entry name" value="Gcp-like_dom"/>
</dbReference>
<dbReference type="InterPro" id="IPR017861">
    <property type="entry name" value="KAE1/TsaD"/>
</dbReference>
<dbReference type="InterPro" id="IPR017860">
    <property type="entry name" value="Peptidase_M22_CS"/>
</dbReference>
<dbReference type="InterPro" id="IPR022450">
    <property type="entry name" value="TsaD"/>
</dbReference>
<dbReference type="NCBIfam" id="TIGR00329">
    <property type="entry name" value="gcp_kae1"/>
    <property type="match status" value="1"/>
</dbReference>
<dbReference type="NCBIfam" id="TIGR03723">
    <property type="entry name" value="T6A_TsaD_YgjD"/>
    <property type="match status" value="1"/>
</dbReference>
<dbReference type="PANTHER" id="PTHR11735">
    <property type="entry name" value="TRNA N6-ADENOSINE THREONYLCARBAMOYLTRANSFERASE"/>
    <property type="match status" value="1"/>
</dbReference>
<dbReference type="PANTHER" id="PTHR11735:SF6">
    <property type="entry name" value="TRNA N6-ADENOSINE THREONYLCARBAMOYLTRANSFERASE, MITOCHONDRIAL"/>
    <property type="match status" value="1"/>
</dbReference>
<dbReference type="Pfam" id="PF00814">
    <property type="entry name" value="TsaD"/>
    <property type="match status" value="1"/>
</dbReference>
<dbReference type="PRINTS" id="PR00789">
    <property type="entry name" value="OSIALOPTASE"/>
</dbReference>
<dbReference type="SUPFAM" id="SSF53067">
    <property type="entry name" value="Actin-like ATPase domain"/>
    <property type="match status" value="2"/>
</dbReference>
<dbReference type="PROSITE" id="PS01016">
    <property type="entry name" value="GLYCOPROTEASE"/>
    <property type="match status" value="1"/>
</dbReference>
<proteinExistence type="inferred from homology"/>
<comment type="function">
    <text evidence="1">Required for the formation of a threonylcarbamoyl group on adenosine at position 37 (t(6)A37) in tRNAs that read codons beginning with adenine. Is involved in the transfer of the threonylcarbamoyl moiety of threonylcarbamoyl-AMP (TC-AMP) to the N6 group of A37, together with TsaE and TsaB. TsaD likely plays a direct catalytic role in this reaction.</text>
</comment>
<comment type="catalytic activity">
    <reaction evidence="1">
        <text>L-threonylcarbamoyladenylate + adenosine(37) in tRNA = N(6)-L-threonylcarbamoyladenosine(37) in tRNA + AMP + H(+)</text>
        <dbReference type="Rhea" id="RHEA:37059"/>
        <dbReference type="Rhea" id="RHEA-COMP:10162"/>
        <dbReference type="Rhea" id="RHEA-COMP:10163"/>
        <dbReference type="ChEBI" id="CHEBI:15378"/>
        <dbReference type="ChEBI" id="CHEBI:73682"/>
        <dbReference type="ChEBI" id="CHEBI:74411"/>
        <dbReference type="ChEBI" id="CHEBI:74418"/>
        <dbReference type="ChEBI" id="CHEBI:456215"/>
        <dbReference type="EC" id="2.3.1.234"/>
    </reaction>
</comment>
<comment type="cofactor">
    <cofactor evidence="1">
        <name>Fe(2+)</name>
        <dbReference type="ChEBI" id="CHEBI:29033"/>
    </cofactor>
    <text evidence="1">Binds 1 Fe(2+) ion per subunit.</text>
</comment>
<comment type="subcellular location">
    <subcellularLocation>
        <location evidence="1">Cytoplasm</location>
    </subcellularLocation>
</comment>
<comment type="similarity">
    <text evidence="1">Belongs to the KAE1 / TsaD family.</text>
</comment>
<evidence type="ECO:0000255" key="1">
    <source>
        <dbReference type="HAMAP-Rule" id="MF_01445"/>
    </source>
</evidence>
<protein>
    <recommendedName>
        <fullName evidence="1">tRNA N6-adenosine threonylcarbamoyltransferase</fullName>
        <ecNumber evidence="1">2.3.1.234</ecNumber>
    </recommendedName>
    <alternativeName>
        <fullName evidence="1">N6-L-threonylcarbamoyladenine synthase</fullName>
        <shortName evidence="1">t(6)A synthase</shortName>
    </alternativeName>
    <alternativeName>
        <fullName evidence="1">t(6)A37 threonylcarbamoyladenosine biosynthesis protein TsaD</fullName>
    </alternativeName>
    <alternativeName>
        <fullName evidence="1">tRNA threonylcarbamoyladenosine biosynthesis protein TsaD</fullName>
    </alternativeName>
</protein>
<organism>
    <name type="scientific">Staphylococcus aureus (strain bovine RF122 / ET3-1)</name>
    <dbReference type="NCBI Taxonomy" id="273036"/>
    <lineage>
        <taxon>Bacteria</taxon>
        <taxon>Bacillati</taxon>
        <taxon>Bacillota</taxon>
        <taxon>Bacilli</taxon>
        <taxon>Bacillales</taxon>
        <taxon>Staphylococcaceae</taxon>
        <taxon>Staphylococcus</taxon>
    </lineage>
</organism>
<name>TSAD_STAAB</name>
<gene>
    <name evidence="1" type="primary">tsaD</name>
    <name type="synonym">gcp</name>
    <name type="ordered locus">SAB1934c</name>
</gene>
<reference key="1">
    <citation type="journal article" date="2007" name="PLoS ONE">
        <title>Molecular correlates of host specialization in Staphylococcus aureus.</title>
        <authorList>
            <person name="Herron-Olson L."/>
            <person name="Fitzgerald J.R."/>
            <person name="Musser J.M."/>
            <person name="Kapur V."/>
        </authorList>
    </citation>
    <scope>NUCLEOTIDE SEQUENCE [LARGE SCALE GENOMIC DNA]</scope>
    <source>
        <strain>bovine RF122 / ET3-1</strain>
    </source>
</reference>
<accession>Q2YUG0</accession>
<feature type="chain" id="PRO_0000303544" description="tRNA N6-adenosine threonylcarbamoyltransferase">
    <location>
        <begin position="1"/>
        <end position="341"/>
    </location>
</feature>
<feature type="binding site" evidence="1">
    <location>
        <position position="115"/>
    </location>
    <ligand>
        <name>Fe cation</name>
        <dbReference type="ChEBI" id="CHEBI:24875"/>
    </ligand>
</feature>
<feature type="binding site" evidence="1">
    <location>
        <position position="119"/>
    </location>
    <ligand>
        <name>Fe cation</name>
        <dbReference type="ChEBI" id="CHEBI:24875"/>
    </ligand>
</feature>
<feature type="binding site" evidence="1">
    <location>
        <begin position="137"/>
        <end position="141"/>
    </location>
    <ligand>
        <name>substrate</name>
    </ligand>
</feature>
<feature type="binding site" evidence="1">
    <location>
        <position position="170"/>
    </location>
    <ligand>
        <name>substrate</name>
    </ligand>
</feature>
<feature type="binding site" evidence="1">
    <location>
        <position position="183"/>
    </location>
    <ligand>
        <name>substrate</name>
    </ligand>
</feature>
<feature type="binding site" evidence="1">
    <location>
        <position position="187"/>
    </location>
    <ligand>
        <name>substrate</name>
    </ligand>
</feature>
<feature type="binding site" evidence="1">
    <location>
        <position position="276"/>
    </location>
    <ligand>
        <name>substrate</name>
    </ligand>
</feature>
<feature type="binding site" evidence="1">
    <location>
        <position position="304"/>
    </location>
    <ligand>
        <name>Fe cation</name>
        <dbReference type="ChEBI" id="CHEBI:24875"/>
    </ligand>
</feature>